<organism>
    <name type="scientific">Lactiplantibacillus plantarum (strain ATCC BAA-793 / NCIMB 8826 / WCFS1)</name>
    <name type="common">Lactobacillus plantarum</name>
    <dbReference type="NCBI Taxonomy" id="220668"/>
    <lineage>
        <taxon>Bacteria</taxon>
        <taxon>Bacillati</taxon>
        <taxon>Bacillota</taxon>
        <taxon>Bacilli</taxon>
        <taxon>Lactobacillales</taxon>
        <taxon>Lactobacillaceae</taxon>
        <taxon>Lactiplantibacillus</taxon>
    </lineage>
</organism>
<keyword id="KW-0067">ATP-binding</keyword>
<keyword id="KW-0119">Carbohydrate metabolism</keyword>
<keyword id="KW-0418">Kinase</keyword>
<keyword id="KW-0460">Magnesium</keyword>
<keyword id="KW-0479">Metal-binding</keyword>
<keyword id="KW-0511">Multifunctional enzyme</keyword>
<keyword id="KW-0547">Nucleotide-binding</keyword>
<keyword id="KW-1185">Reference proteome</keyword>
<keyword id="KW-0723">Serine/threonine-protein kinase</keyword>
<keyword id="KW-0808">Transferase</keyword>
<accession>Q88YK3</accession>
<accession>F9ULY1</accession>
<dbReference type="EC" id="2.7.11.-" evidence="1"/>
<dbReference type="EC" id="2.7.4.-" evidence="1"/>
<dbReference type="EMBL" id="AL935263">
    <property type="protein sequence ID" value="CCC78220.1"/>
    <property type="molecule type" value="Genomic_DNA"/>
</dbReference>
<dbReference type="RefSeq" id="WP_003643956.1">
    <property type="nucleotide sequence ID" value="NC_004567.2"/>
</dbReference>
<dbReference type="RefSeq" id="YP_004888734.1">
    <property type="nucleotide sequence ID" value="NC_004567.2"/>
</dbReference>
<dbReference type="SMR" id="Q88YK3"/>
<dbReference type="STRING" id="220668.lp_0754"/>
<dbReference type="EnsemblBacteria" id="CCC78220">
    <property type="protein sequence ID" value="CCC78220"/>
    <property type="gene ID" value="lp_0754"/>
</dbReference>
<dbReference type="GeneID" id="89668320"/>
<dbReference type="KEGG" id="lpl:lp_0754"/>
<dbReference type="PATRIC" id="fig|220668.9.peg.635"/>
<dbReference type="eggNOG" id="COG1493">
    <property type="taxonomic scope" value="Bacteria"/>
</dbReference>
<dbReference type="HOGENOM" id="CLU_052030_0_1_9"/>
<dbReference type="OrthoDB" id="9778803at2"/>
<dbReference type="PhylomeDB" id="Q88YK3"/>
<dbReference type="Proteomes" id="UP000000432">
    <property type="component" value="Chromosome"/>
</dbReference>
<dbReference type="GO" id="GO:0005524">
    <property type="term" value="F:ATP binding"/>
    <property type="evidence" value="ECO:0007669"/>
    <property type="project" value="UniProtKB-UniRule"/>
</dbReference>
<dbReference type="GO" id="GO:0000287">
    <property type="term" value="F:magnesium ion binding"/>
    <property type="evidence" value="ECO:0007669"/>
    <property type="project" value="UniProtKB-UniRule"/>
</dbReference>
<dbReference type="GO" id="GO:0000155">
    <property type="term" value="F:phosphorelay sensor kinase activity"/>
    <property type="evidence" value="ECO:0007669"/>
    <property type="project" value="InterPro"/>
</dbReference>
<dbReference type="GO" id="GO:0004674">
    <property type="term" value="F:protein serine/threonine kinase activity"/>
    <property type="evidence" value="ECO:0007669"/>
    <property type="project" value="UniProtKB-KW"/>
</dbReference>
<dbReference type="GO" id="GO:0004712">
    <property type="term" value="F:protein serine/threonine/tyrosine kinase activity"/>
    <property type="evidence" value="ECO:0007669"/>
    <property type="project" value="UniProtKB-UniRule"/>
</dbReference>
<dbReference type="GO" id="GO:0006109">
    <property type="term" value="P:regulation of carbohydrate metabolic process"/>
    <property type="evidence" value="ECO:0007669"/>
    <property type="project" value="UniProtKB-UniRule"/>
</dbReference>
<dbReference type="CDD" id="cd01918">
    <property type="entry name" value="HprK_C"/>
    <property type="match status" value="1"/>
</dbReference>
<dbReference type="FunFam" id="3.40.50.300:FF:000174">
    <property type="entry name" value="HPr kinase/phosphorylase"/>
    <property type="match status" value="1"/>
</dbReference>
<dbReference type="Gene3D" id="3.40.1390.20">
    <property type="entry name" value="HprK N-terminal domain-like"/>
    <property type="match status" value="1"/>
</dbReference>
<dbReference type="Gene3D" id="3.40.50.300">
    <property type="entry name" value="P-loop containing nucleotide triphosphate hydrolases"/>
    <property type="match status" value="1"/>
</dbReference>
<dbReference type="HAMAP" id="MF_01249">
    <property type="entry name" value="HPr_kinase"/>
    <property type="match status" value="1"/>
</dbReference>
<dbReference type="InterPro" id="IPR003755">
    <property type="entry name" value="HPr(Ser)_kin/Pase"/>
</dbReference>
<dbReference type="InterPro" id="IPR011104">
    <property type="entry name" value="Hpr_kin/Pase_C"/>
</dbReference>
<dbReference type="InterPro" id="IPR011126">
    <property type="entry name" value="Hpr_kin/Pase_Hpr_N"/>
</dbReference>
<dbReference type="InterPro" id="IPR027417">
    <property type="entry name" value="P-loop_NTPase"/>
</dbReference>
<dbReference type="InterPro" id="IPR028979">
    <property type="entry name" value="Ser_kin/Pase_Hpr-like_N_sf"/>
</dbReference>
<dbReference type="NCBIfam" id="TIGR00679">
    <property type="entry name" value="hpr-ser"/>
    <property type="match status" value="1"/>
</dbReference>
<dbReference type="PANTHER" id="PTHR30305:SF1">
    <property type="entry name" value="HPR KINASE_PHOSPHORYLASE"/>
    <property type="match status" value="1"/>
</dbReference>
<dbReference type="PANTHER" id="PTHR30305">
    <property type="entry name" value="PROTEIN YJDM-RELATED"/>
    <property type="match status" value="1"/>
</dbReference>
<dbReference type="Pfam" id="PF07475">
    <property type="entry name" value="Hpr_kinase_C"/>
    <property type="match status" value="1"/>
</dbReference>
<dbReference type="Pfam" id="PF02603">
    <property type="entry name" value="Hpr_kinase_N"/>
    <property type="match status" value="1"/>
</dbReference>
<dbReference type="SUPFAM" id="SSF75138">
    <property type="entry name" value="HprK N-terminal domain-like"/>
    <property type="match status" value="1"/>
</dbReference>
<dbReference type="SUPFAM" id="SSF53795">
    <property type="entry name" value="PEP carboxykinase-like"/>
    <property type="match status" value="1"/>
</dbReference>
<feature type="chain" id="PRO_0000058963" description="HPr kinase/phosphorylase">
    <location>
        <begin position="1"/>
        <end position="315"/>
    </location>
</feature>
<feature type="region of interest" description="Important for the catalytic mechanism of both phosphorylation and dephosphorylation" evidence="1">
    <location>
        <begin position="203"/>
        <end position="212"/>
    </location>
</feature>
<feature type="region of interest" description="Important for the catalytic mechanism of dephosphorylation" evidence="1">
    <location>
        <begin position="266"/>
        <end position="271"/>
    </location>
</feature>
<feature type="active site" evidence="1">
    <location>
        <position position="140"/>
    </location>
</feature>
<feature type="active site" evidence="1">
    <location>
        <position position="161"/>
    </location>
</feature>
<feature type="active site" description="Proton acceptor; for phosphorylation activity. Proton donor; for dephosphorylation activity" evidence="1">
    <location>
        <position position="179"/>
    </location>
</feature>
<feature type="active site" evidence="1">
    <location>
        <position position="245"/>
    </location>
</feature>
<feature type="binding site" evidence="1">
    <location>
        <begin position="155"/>
        <end position="162"/>
    </location>
    <ligand>
        <name>ATP</name>
        <dbReference type="ChEBI" id="CHEBI:30616"/>
    </ligand>
</feature>
<feature type="binding site" evidence="1">
    <location>
        <position position="162"/>
    </location>
    <ligand>
        <name>Mg(2+)</name>
        <dbReference type="ChEBI" id="CHEBI:18420"/>
    </ligand>
</feature>
<feature type="binding site" evidence="1">
    <location>
        <position position="204"/>
    </location>
    <ligand>
        <name>Mg(2+)</name>
        <dbReference type="ChEBI" id="CHEBI:18420"/>
    </ligand>
</feature>
<sequence length="315" mass="34872">MAGSVTVADLVKNTRLDVYHGADLLEKKDITTSDISRPGLALTGYFNYYPRERVQLLGKTETAYSKNMSHDERLMIFRKMCQLTTPAFVISTGLPVPEELVQAGEENGVPILGTKMTSSRILSNMTNYLEGKLAERQSVHGVLVDIYGLGVLITGDSGVGKSETALELVKRGHRLIADDRVDVYQQDEQTLVGEAPAILNHLLEIRGIGIIDVMNLFGAGAVRQDTDIDLIVHLENWTPDKQFDRLGNGEQNRKFFDVEVPEISIPVKTGRNLAIIIEAAAMNFRAESMGYDATKVFDDNLNKLIKTNSVHDSHK</sequence>
<comment type="function">
    <text evidence="1">Catalyzes the ATP- as well as the pyrophosphate-dependent phosphorylation of a specific serine residue in HPr, a phosphocarrier protein of the phosphoenolpyruvate-dependent sugar phosphotransferase system (PTS). HprK/P also catalyzes the pyrophosphate-producing, inorganic phosphate-dependent dephosphorylation (phosphorolysis) of seryl-phosphorylated HPr (P-Ser-HPr). The two antagonistic activities of HprK/P are regulated by several intracellular metabolites, which change their concentration in response to the absence or presence of rapidly metabolisable carbon sources (glucose, fructose, etc.) in the growth medium. Therefore, by controlling the phosphorylation state of HPr, HPrK/P is a sensor enzyme that plays a major role in the regulation of carbon metabolism and sugar transport: it mediates carbon catabolite repression (CCR), and regulates PTS-catalyzed carbohydrate uptake and inducer exclusion.</text>
</comment>
<comment type="catalytic activity">
    <reaction evidence="1">
        <text>[HPr protein]-L-serine + ATP = [HPr protein]-O-phospho-L-serine + ADP + H(+)</text>
        <dbReference type="Rhea" id="RHEA:46600"/>
        <dbReference type="Rhea" id="RHEA-COMP:11602"/>
        <dbReference type="Rhea" id="RHEA-COMP:11603"/>
        <dbReference type="ChEBI" id="CHEBI:15378"/>
        <dbReference type="ChEBI" id="CHEBI:29999"/>
        <dbReference type="ChEBI" id="CHEBI:30616"/>
        <dbReference type="ChEBI" id="CHEBI:83421"/>
        <dbReference type="ChEBI" id="CHEBI:456216"/>
    </reaction>
</comment>
<comment type="catalytic activity">
    <reaction evidence="1">
        <text>[HPr protein]-O-phospho-L-serine + phosphate + H(+) = [HPr protein]-L-serine + diphosphate</text>
        <dbReference type="Rhea" id="RHEA:46604"/>
        <dbReference type="Rhea" id="RHEA-COMP:11602"/>
        <dbReference type="Rhea" id="RHEA-COMP:11603"/>
        <dbReference type="ChEBI" id="CHEBI:15378"/>
        <dbReference type="ChEBI" id="CHEBI:29999"/>
        <dbReference type="ChEBI" id="CHEBI:33019"/>
        <dbReference type="ChEBI" id="CHEBI:43474"/>
        <dbReference type="ChEBI" id="CHEBI:83421"/>
    </reaction>
</comment>
<comment type="cofactor">
    <cofactor evidence="1">
        <name>Mg(2+)</name>
        <dbReference type="ChEBI" id="CHEBI:18420"/>
    </cofactor>
</comment>
<comment type="subunit">
    <text evidence="1">Homohexamer.</text>
</comment>
<comment type="domain">
    <text evidence="1">The Walker A ATP-binding motif also binds Pi and PPi.</text>
</comment>
<comment type="miscellaneous">
    <text evidence="1">Both phosphorylation and phosphorolysis are carried out by the same active site and suggest a common mechanism for both reactions.</text>
</comment>
<comment type="similarity">
    <text evidence="1">Belongs to the HPrK/P family.</text>
</comment>
<proteinExistence type="inferred from homology"/>
<reference key="1">
    <citation type="journal article" date="2003" name="Proc. Natl. Acad. Sci. U.S.A.">
        <title>Complete genome sequence of Lactobacillus plantarum WCFS1.</title>
        <authorList>
            <person name="Kleerebezem M."/>
            <person name="Boekhorst J."/>
            <person name="van Kranenburg R."/>
            <person name="Molenaar D."/>
            <person name="Kuipers O.P."/>
            <person name="Leer R."/>
            <person name="Tarchini R."/>
            <person name="Peters S.A."/>
            <person name="Sandbrink H.M."/>
            <person name="Fiers M.W.E.J."/>
            <person name="Stiekema W."/>
            <person name="Klein Lankhorst R.M."/>
            <person name="Bron P.A."/>
            <person name="Hoffer S.M."/>
            <person name="Nierop Groot M.N."/>
            <person name="Kerkhoven R."/>
            <person name="De Vries M."/>
            <person name="Ursing B."/>
            <person name="De Vos W.M."/>
            <person name="Siezen R.J."/>
        </authorList>
    </citation>
    <scope>NUCLEOTIDE SEQUENCE [LARGE SCALE GENOMIC DNA]</scope>
    <source>
        <strain>ATCC BAA-793 / NCIMB 8826 / WCFS1</strain>
    </source>
</reference>
<reference key="2">
    <citation type="journal article" date="2012" name="J. Bacteriol.">
        <title>Complete resequencing and reannotation of the Lactobacillus plantarum WCFS1 genome.</title>
        <authorList>
            <person name="Siezen R.J."/>
            <person name="Francke C."/>
            <person name="Renckens B."/>
            <person name="Boekhorst J."/>
            <person name="Wels M."/>
            <person name="Kleerebezem M."/>
            <person name="van Hijum S.A."/>
        </authorList>
    </citation>
    <scope>NUCLEOTIDE SEQUENCE [LARGE SCALE GENOMIC DNA]</scope>
    <scope>GENOME REANNOTATION</scope>
    <source>
        <strain>ATCC BAA-793 / NCIMB 8826 / WCFS1</strain>
    </source>
</reference>
<gene>
    <name evidence="1" type="primary">hprK</name>
    <name type="ordered locus">lp_0754</name>
</gene>
<evidence type="ECO:0000255" key="1">
    <source>
        <dbReference type="HAMAP-Rule" id="MF_01249"/>
    </source>
</evidence>
<name>HPRK_LACPL</name>
<protein>
    <recommendedName>
        <fullName evidence="1">HPr kinase/phosphorylase</fullName>
        <shortName evidence="1">HPrK/P</shortName>
        <ecNumber evidence="1">2.7.11.-</ecNumber>
        <ecNumber evidence="1">2.7.4.-</ecNumber>
    </recommendedName>
    <alternativeName>
        <fullName evidence="1">HPr(Ser) kinase/phosphorylase</fullName>
    </alternativeName>
</protein>